<sequence length="382" mass="41381">MSAWVLPDHIADVLPSEARHIEELRRGLLDTARCYGYELVMPPLMEHLESLLTGTGEALDLQTFKLVDQLSGRSLGLRADTTPQVARIDAHLLNRKGVTRLCYCGPVLHTRPDRPHATREPLQFGAEIYGHSGLEADLEALQLARECLRVAGVRDTTIDLADMRIVRKLLAGVALSPQRLSRIHAALAAKDAGELAALTHCFAADSRAALLALLQLYGDEAVLAEAEKALQRIDGISPVLANLRWLASRLEGAQVTFDLADLRGYAYYSGARFAIYARGASDALVRGGRYDEVGAVFGRNRPAVGLSLDIKQVVGVVPPQTLKAAIRAPWGEAADVNAAIAELRAAGETVVCVLPGHESEVDEFHCDRELAQVSGRWVVQAV</sequence>
<evidence type="ECO:0000255" key="1">
    <source>
        <dbReference type="HAMAP-Rule" id="MF_00125"/>
    </source>
</evidence>
<feature type="chain" id="PRO_1000016291" description="ATP phosphoribosyltransferase regulatory subunit">
    <location>
        <begin position="1"/>
        <end position="382"/>
    </location>
</feature>
<dbReference type="EMBL" id="CP000542">
    <property type="protein sequence ID" value="ABM58893.1"/>
    <property type="molecule type" value="Genomic_DNA"/>
</dbReference>
<dbReference type="RefSeq" id="WP_011810886.1">
    <property type="nucleotide sequence ID" value="NC_008786.1"/>
</dbReference>
<dbReference type="SMR" id="A1WMN6"/>
<dbReference type="STRING" id="391735.Veis_3163"/>
<dbReference type="GeneID" id="76461619"/>
<dbReference type="KEGG" id="vei:Veis_3163"/>
<dbReference type="eggNOG" id="COG3705">
    <property type="taxonomic scope" value="Bacteria"/>
</dbReference>
<dbReference type="HOGENOM" id="CLU_025113_0_1_4"/>
<dbReference type="OrthoDB" id="9769617at2"/>
<dbReference type="UniPathway" id="UPA00031">
    <property type="reaction ID" value="UER00006"/>
</dbReference>
<dbReference type="Proteomes" id="UP000000374">
    <property type="component" value="Chromosome"/>
</dbReference>
<dbReference type="GO" id="GO:0005737">
    <property type="term" value="C:cytoplasm"/>
    <property type="evidence" value="ECO:0007669"/>
    <property type="project" value="UniProtKB-SubCell"/>
</dbReference>
<dbReference type="GO" id="GO:0004821">
    <property type="term" value="F:histidine-tRNA ligase activity"/>
    <property type="evidence" value="ECO:0007669"/>
    <property type="project" value="TreeGrafter"/>
</dbReference>
<dbReference type="GO" id="GO:0006427">
    <property type="term" value="P:histidyl-tRNA aminoacylation"/>
    <property type="evidence" value="ECO:0007669"/>
    <property type="project" value="TreeGrafter"/>
</dbReference>
<dbReference type="GO" id="GO:0000105">
    <property type="term" value="P:L-histidine biosynthetic process"/>
    <property type="evidence" value="ECO:0007669"/>
    <property type="project" value="UniProtKB-UniRule"/>
</dbReference>
<dbReference type="CDD" id="cd00773">
    <property type="entry name" value="HisRS-like_core"/>
    <property type="match status" value="1"/>
</dbReference>
<dbReference type="Gene3D" id="3.30.930.10">
    <property type="entry name" value="Bira Bifunctional Protein, Domain 2"/>
    <property type="match status" value="1"/>
</dbReference>
<dbReference type="HAMAP" id="MF_00125">
    <property type="entry name" value="HisZ"/>
    <property type="match status" value="1"/>
</dbReference>
<dbReference type="InterPro" id="IPR045864">
    <property type="entry name" value="aa-tRNA-synth_II/BPL/LPL"/>
</dbReference>
<dbReference type="InterPro" id="IPR041715">
    <property type="entry name" value="HisRS-like_core"/>
</dbReference>
<dbReference type="InterPro" id="IPR004516">
    <property type="entry name" value="HisRS/HisZ"/>
</dbReference>
<dbReference type="InterPro" id="IPR004517">
    <property type="entry name" value="HisZ"/>
</dbReference>
<dbReference type="NCBIfam" id="NF008935">
    <property type="entry name" value="PRK12292.1-1"/>
    <property type="match status" value="1"/>
</dbReference>
<dbReference type="NCBIfam" id="NF009086">
    <property type="entry name" value="PRK12421.1"/>
    <property type="match status" value="1"/>
</dbReference>
<dbReference type="PANTHER" id="PTHR43707:SF1">
    <property type="entry name" value="HISTIDINE--TRNA LIGASE, MITOCHONDRIAL-RELATED"/>
    <property type="match status" value="1"/>
</dbReference>
<dbReference type="PANTHER" id="PTHR43707">
    <property type="entry name" value="HISTIDYL-TRNA SYNTHETASE"/>
    <property type="match status" value="1"/>
</dbReference>
<dbReference type="Pfam" id="PF13393">
    <property type="entry name" value="tRNA-synt_His"/>
    <property type="match status" value="1"/>
</dbReference>
<dbReference type="PIRSF" id="PIRSF001549">
    <property type="entry name" value="His-tRNA_synth"/>
    <property type="match status" value="1"/>
</dbReference>
<dbReference type="SUPFAM" id="SSF55681">
    <property type="entry name" value="Class II aaRS and biotin synthetases"/>
    <property type="match status" value="1"/>
</dbReference>
<name>HISZ_VEREI</name>
<gene>
    <name evidence="1" type="primary">hisZ</name>
    <name type="ordered locus">Veis_3163</name>
</gene>
<proteinExistence type="inferred from homology"/>
<reference key="1">
    <citation type="submission" date="2006-12" db="EMBL/GenBank/DDBJ databases">
        <title>Complete sequence of chromosome 1 of Verminephrobacter eiseniae EF01-2.</title>
        <authorList>
            <person name="Copeland A."/>
            <person name="Lucas S."/>
            <person name="Lapidus A."/>
            <person name="Barry K."/>
            <person name="Detter J.C."/>
            <person name="Glavina del Rio T."/>
            <person name="Dalin E."/>
            <person name="Tice H."/>
            <person name="Pitluck S."/>
            <person name="Chertkov O."/>
            <person name="Brettin T."/>
            <person name="Bruce D."/>
            <person name="Han C."/>
            <person name="Tapia R."/>
            <person name="Gilna P."/>
            <person name="Schmutz J."/>
            <person name="Larimer F."/>
            <person name="Land M."/>
            <person name="Hauser L."/>
            <person name="Kyrpides N."/>
            <person name="Kim E."/>
            <person name="Stahl D."/>
            <person name="Richardson P."/>
        </authorList>
    </citation>
    <scope>NUCLEOTIDE SEQUENCE [LARGE SCALE GENOMIC DNA]</scope>
    <source>
        <strain>EF01-2</strain>
    </source>
</reference>
<comment type="function">
    <text evidence="1">Required for the first step of histidine biosynthesis. May allow the feedback regulation of ATP phosphoribosyltransferase activity by histidine.</text>
</comment>
<comment type="pathway">
    <text evidence="1">Amino-acid biosynthesis; L-histidine biosynthesis; L-histidine from 5-phospho-alpha-D-ribose 1-diphosphate: step 1/9.</text>
</comment>
<comment type="subunit">
    <text evidence="1">Heteromultimer composed of HisG and HisZ subunits.</text>
</comment>
<comment type="subcellular location">
    <subcellularLocation>
        <location evidence="1">Cytoplasm</location>
    </subcellularLocation>
</comment>
<comment type="miscellaneous">
    <text>This function is generally fulfilled by the C-terminal part of HisG, which is missing in some bacteria such as this one.</text>
</comment>
<comment type="similarity">
    <text evidence="1">Belongs to the class-II aminoacyl-tRNA synthetase family. HisZ subfamily.</text>
</comment>
<keyword id="KW-0028">Amino-acid biosynthesis</keyword>
<keyword id="KW-0963">Cytoplasm</keyword>
<keyword id="KW-0368">Histidine biosynthesis</keyword>
<keyword id="KW-1185">Reference proteome</keyword>
<organism>
    <name type="scientific">Verminephrobacter eiseniae (strain EF01-2)</name>
    <dbReference type="NCBI Taxonomy" id="391735"/>
    <lineage>
        <taxon>Bacteria</taxon>
        <taxon>Pseudomonadati</taxon>
        <taxon>Pseudomonadota</taxon>
        <taxon>Betaproteobacteria</taxon>
        <taxon>Burkholderiales</taxon>
        <taxon>Comamonadaceae</taxon>
        <taxon>Verminephrobacter</taxon>
    </lineage>
</organism>
<accession>A1WMN6</accession>
<protein>
    <recommendedName>
        <fullName evidence="1">ATP phosphoribosyltransferase regulatory subunit</fullName>
    </recommendedName>
</protein>